<accession>A4SCR0</accession>
<comment type="function">
    <text evidence="1">One of the primary rRNA binding proteins, this protein initially binds near the 5'-end of the 23S rRNA. It is important during the early stages of 50S assembly. It makes multiple contacts with different domains of the 23S rRNA in the assembled 50S subunit and ribosome.</text>
</comment>
<comment type="function">
    <text evidence="1">Forms part of the polypeptide exit tunnel.</text>
</comment>
<comment type="subunit">
    <text evidence="1">Part of the 50S ribosomal subunit.</text>
</comment>
<comment type="similarity">
    <text evidence="1">Belongs to the universal ribosomal protein uL4 family.</text>
</comment>
<evidence type="ECO:0000255" key="1">
    <source>
        <dbReference type="HAMAP-Rule" id="MF_01328"/>
    </source>
</evidence>
<evidence type="ECO:0000256" key="2">
    <source>
        <dbReference type="SAM" id="MobiDB-lite"/>
    </source>
</evidence>
<evidence type="ECO:0000305" key="3"/>
<name>RL4_CHLPM</name>
<reference key="1">
    <citation type="submission" date="2007-03" db="EMBL/GenBank/DDBJ databases">
        <title>Complete sequence of Prosthecochloris vibrioformis DSM 265.</title>
        <authorList>
            <consortium name="US DOE Joint Genome Institute"/>
            <person name="Copeland A."/>
            <person name="Lucas S."/>
            <person name="Lapidus A."/>
            <person name="Barry K."/>
            <person name="Detter J.C."/>
            <person name="Glavina del Rio T."/>
            <person name="Hammon N."/>
            <person name="Israni S."/>
            <person name="Pitluck S."/>
            <person name="Schmutz J."/>
            <person name="Larimer F."/>
            <person name="Land M."/>
            <person name="Hauser L."/>
            <person name="Mikhailova N."/>
            <person name="Li T."/>
            <person name="Overmann J."/>
            <person name="Schuster S.C."/>
            <person name="Bryant D.A."/>
            <person name="Richardson P."/>
        </authorList>
    </citation>
    <scope>NUCLEOTIDE SEQUENCE [LARGE SCALE GENOMIC DNA]</scope>
    <source>
        <strain>DSM 265 / 1930</strain>
    </source>
</reference>
<sequence length="208" mass="22802">MELKVLTTAGTESGEVVTLRDDIFGAEVSEHAVYLDVKSILANRRQGTHKSKTRAEVRGGGRKPYRQKGTGNARQGSTRSPLMVGGGTIFGPTPHGYDQKVNKKVKALARRSAFSSKAQDGRILVVEDFKLDEIKTKPFAAILKNLGLDEKKTLMLTPEYNVIITRSGKNIQTVNIMSAEKASTYDILNSHTVLFQKAALKKIEETLG</sequence>
<dbReference type="EMBL" id="CP000607">
    <property type="protein sequence ID" value="ABP36269.1"/>
    <property type="molecule type" value="Genomic_DNA"/>
</dbReference>
<dbReference type="SMR" id="A4SCR0"/>
<dbReference type="STRING" id="290318.Cvib_0247"/>
<dbReference type="KEGG" id="pvi:Cvib_0247"/>
<dbReference type="eggNOG" id="COG0088">
    <property type="taxonomic scope" value="Bacteria"/>
</dbReference>
<dbReference type="HOGENOM" id="CLU_041575_5_2_10"/>
<dbReference type="OrthoDB" id="9803201at2"/>
<dbReference type="GO" id="GO:1990904">
    <property type="term" value="C:ribonucleoprotein complex"/>
    <property type="evidence" value="ECO:0007669"/>
    <property type="project" value="UniProtKB-KW"/>
</dbReference>
<dbReference type="GO" id="GO:0005840">
    <property type="term" value="C:ribosome"/>
    <property type="evidence" value="ECO:0007669"/>
    <property type="project" value="UniProtKB-KW"/>
</dbReference>
<dbReference type="GO" id="GO:0019843">
    <property type="term" value="F:rRNA binding"/>
    <property type="evidence" value="ECO:0007669"/>
    <property type="project" value="UniProtKB-UniRule"/>
</dbReference>
<dbReference type="GO" id="GO:0003735">
    <property type="term" value="F:structural constituent of ribosome"/>
    <property type="evidence" value="ECO:0007669"/>
    <property type="project" value="InterPro"/>
</dbReference>
<dbReference type="GO" id="GO:0006412">
    <property type="term" value="P:translation"/>
    <property type="evidence" value="ECO:0007669"/>
    <property type="project" value="UniProtKB-UniRule"/>
</dbReference>
<dbReference type="Gene3D" id="3.40.1370.10">
    <property type="match status" value="1"/>
</dbReference>
<dbReference type="HAMAP" id="MF_01328_B">
    <property type="entry name" value="Ribosomal_uL4_B"/>
    <property type="match status" value="1"/>
</dbReference>
<dbReference type="InterPro" id="IPR002136">
    <property type="entry name" value="Ribosomal_uL4"/>
</dbReference>
<dbReference type="InterPro" id="IPR013005">
    <property type="entry name" value="Ribosomal_uL4-like"/>
</dbReference>
<dbReference type="InterPro" id="IPR023574">
    <property type="entry name" value="Ribosomal_uL4_dom_sf"/>
</dbReference>
<dbReference type="NCBIfam" id="TIGR03953">
    <property type="entry name" value="rplD_bact"/>
    <property type="match status" value="1"/>
</dbReference>
<dbReference type="PANTHER" id="PTHR10746">
    <property type="entry name" value="50S RIBOSOMAL PROTEIN L4"/>
    <property type="match status" value="1"/>
</dbReference>
<dbReference type="PANTHER" id="PTHR10746:SF6">
    <property type="entry name" value="LARGE RIBOSOMAL SUBUNIT PROTEIN UL4M"/>
    <property type="match status" value="1"/>
</dbReference>
<dbReference type="Pfam" id="PF00573">
    <property type="entry name" value="Ribosomal_L4"/>
    <property type="match status" value="1"/>
</dbReference>
<dbReference type="SUPFAM" id="SSF52166">
    <property type="entry name" value="Ribosomal protein L4"/>
    <property type="match status" value="1"/>
</dbReference>
<proteinExistence type="inferred from homology"/>
<keyword id="KW-0687">Ribonucleoprotein</keyword>
<keyword id="KW-0689">Ribosomal protein</keyword>
<keyword id="KW-0694">RNA-binding</keyword>
<keyword id="KW-0699">rRNA-binding</keyword>
<protein>
    <recommendedName>
        <fullName evidence="1">Large ribosomal subunit protein uL4</fullName>
    </recommendedName>
    <alternativeName>
        <fullName evidence="3">50S ribosomal protein L4</fullName>
    </alternativeName>
</protein>
<gene>
    <name evidence="1" type="primary">rplD</name>
    <name type="ordered locus">Cvib_0247</name>
</gene>
<feature type="chain" id="PRO_1000086531" description="Large ribosomal subunit protein uL4">
    <location>
        <begin position="1"/>
        <end position="208"/>
    </location>
</feature>
<feature type="region of interest" description="Disordered" evidence="2">
    <location>
        <begin position="45"/>
        <end position="96"/>
    </location>
</feature>
<feature type="compositionally biased region" description="Polar residues" evidence="2">
    <location>
        <begin position="69"/>
        <end position="80"/>
    </location>
</feature>
<organism>
    <name type="scientific">Chlorobium phaeovibrioides (strain DSM 265 / 1930)</name>
    <name type="common">Prosthecochloris vibrioformis (strain DSM 265)</name>
    <dbReference type="NCBI Taxonomy" id="290318"/>
    <lineage>
        <taxon>Bacteria</taxon>
        <taxon>Pseudomonadati</taxon>
        <taxon>Chlorobiota</taxon>
        <taxon>Chlorobiia</taxon>
        <taxon>Chlorobiales</taxon>
        <taxon>Chlorobiaceae</taxon>
        <taxon>Chlorobium/Pelodictyon group</taxon>
        <taxon>Chlorobium</taxon>
    </lineage>
</organism>